<protein>
    <recommendedName>
        <fullName evidence="1">Nucleoside diphosphate kinase</fullName>
        <shortName evidence="1">NDK</shortName>
        <shortName evidence="1">NDP kinase</shortName>
        <ecNumber evidence="1">2.7.4.6</ecNumber>
    </recommendedName>
    <alternativeName>
        <fullName evidence="1">Nucleoside-2-P kinase</fullName>
    </alternativeName>
</protein>
<dbReference type="EC" id="2.7.4.6" evidence="1"/>
<dbReference type="EMBL" id="CP001399">
    <property type="protein sequence ID" value="ACP36012.1"/>
    <property type="molecule type" value="Genomic_DNA"/>
</dbReference>
<dbReference type="RefSeq" id="WP_012711881.1">
    <property type="nucleotide sequence ID" value="NC_012589.1"/>
</dbReference>
<dbReference type="SMR" id="C3MRJ9"/>
<dbReference type="GeneID" id="84062220"/>
<dbReference type="KEGG" id="sis:LS215_2017"/>
<dbReference type="HOGENOM" id="CLU_060216_6_3_2"/>
<dbReference type="OrthoDB" id="6874at2157"/>
<dbReference type="Proteomes" id="UP000001747">
    <property type="component" value="Chromosome"/>
</dbReference>
<dbReference type="GO" id="GO:0005737">
    <property type="term" value="C:cytoplasm"/>
    <property type="evidence" value="ECO:0007669"/>
    <property type="project" value="UniProtKB-SubCell"/>
</dbReference>
<dbReference type="GO" id="GO:0005524">
    <property type="term" value="F:ATP binding"/>
    <property type="evidence" value="ECO:0007669"/>
    <property type="project" value="UniProtKB-UniRule"/>
</dbReference>
<dbReference type="GO" id="GO:0046872">
    <property type="term" value="F:metal ion binding"/>
    <property type="evidence" value="ECO:0007669"/>
    <property type="project" value="UniProtKB-KW"/>
</dbReference>
<dbReference type="GO" id="GO:0004550">
    <property type="term" value="F:nucleoside diphosphate kinase activity"/>
    <property type="evidence" value="ECO:0007669"/>
    <property type="project" value="UniProtKB-UniRule"/>
</dbReference>
<dbReference type="GO" id="GO:0006241">
    <property type="term" value="P:CTP biosynthetic process"/>
    <property type="evidence" value="ECO:0007669"/>
    <property type="project" value="UniProtKB-UniRule"/>
</dbReference>
<dbReference type="GO" id="GO:0006183">
    <property type="term" value="P:GTP biosynthetic process"/>
    <property type="evidence" value="ECO:0007669"/>
    <property type="project" value="UniProtKB-UniRule"/>
</dbReference>
<dbReference type="GO" id="GO:0006228">
    <property type="term" value="P:UTP biosynthetic process"/>
    <property type="evidence" value="ECO:0007669"/>
    <property type="project" value="UniProtKB-UniRule"/>
</dbReference>
<dbReference type="CDD" id="cd04413">
    <property type="entry name" value="NDPk_I"/>
    <property type="match status" value="1"/>
</dbReference>
<dbReference type="FunFam" id="3.30.70.141:FF:000003">
    <property type="entry name" value="Nucleoside diphosphate kinase"/>
    <property type="match status" value="1"/>
</dbReference>
<dbReference type="Gene3D" id="3.30.70.141">
    <property type="entry name" value="Nucleoside diphosphate kinase-like domain"/>
    <property type="match status" value="1"/>
</dbReference>
<dbReference type="HAMAP" id="MF_00451">
    <property type="entry name" value="NDP_kinase"/>
    <property type="match status" value="1"/>
</dbReference>
<dbReference type="InterPro" id="IPR034907">
    <property type="entry name" value="NDK-like_dom"/>
</dbReference>
<dbReference type="InterPro" id="IPR036850">
    <property type="entry name" value="NDK-like_dom_sf"/>
</dbReference>
<dbReference type="InterPro" id="IPR001564">
    <property type="entry name" value="Nucleoside_diP_kinase"/>
</dbReference>
<dbReference type="InterPro" id="IPR023005">
    <property type="entry name" value="Nucleoside_diP_kinase_AS"/>
</dbReference>
<dbReference type="NCBIfam" id="NF001908">
    <property type="entry name" value="PRK00668.1"/>
    <property type="match status" value="1"/>
</dbReference>
<dbReference type="PANTHER" id="PTHR11349">
    <property type="entry name" value="NUCLEOSIDE DIPHOSPHATE KINASE"/>
    <property type="match status" value="1"/>
</dbReference>
<dbReference type="Pfam" id="PF00334">
    <property type="entry name" value="NDK"/>
    <property type="match status" value="1"/>
</dbReference>
<dbReference type="PRINTS" id="PR01243">
    <property type="entry name" value="NUCDPKINASE"/>
</dbReference>
<dbReference type="SMART" id="SM00562">
    <property type="entry name" value="NDK"/>
    <property type="match status" value="1"/>
</dbReference>
<dbReference type="SUPFAM" id="SSF54919">
    <property type="entry name" value="Nucleoside diphosphate kinase, NDK"/>
    <property type="match status" value="1"/>
</dbReference>
<dbReference type="PROSITE" id="PS00469">
    <property type="entry name" value="NDPK"/>
    <property type="match status" value="1"/>
</dbReference>
<dbReference type="PROSITE" id="PS51374">
    <property type="entry name" value="NDPK_LIKE"/>
    <property type="match status" value="1"/>
</dbReference>
<gene>
    <name evidence="1" type="primary">ndk</name>
    <name type="ordered locus">LS215_2017</name>
</gene>
<reference key="1">
    <citation type="journal article" date="2009" name="Proc. Natl. Acad. Sci. U.S.A.">
        <title>Biogeography of the Sulfolobus islandicus pan-genome.</title>
        <authorList>
            <person name="Reno M.L."/>
            <person name="Held N.L."/>
            <person name="Fields C.J."/>
            <person name="Burke P.V."/>
            <person name="Whitaker R.J."/>
        </authorList>
    </citation>
    <scope>NUCLEOTIDE SEQUENCE [LARGE SCALE GENOMIC DNA]</scope>
    <source>
        <strain>L.S.2.15 / Lassen #1</strain>
    </source>
</reference>
<keyword id="KW-0067">ATP-binding</keyword>
<keyword id="KW-0963">Cytoplasm</keyword>
<keyword id="KW-0418">Kinase</keyword>
<keyword id="KW-0460">Magnesium</keyword>
<keyword id="KW-0479">Metal-binding</keyword>
<keyword id="KW-0546">Nucleotide metabolism</keyword>
<keyword id="KW-0547">Nucleotide-binding</keyword>
<keyword id="KW-0597">Phosphoprotein</keyword>
<keyword id="KW-0808">Transferase</keyword>
<evidence type="ECO:0000255" key="1">
    <source>
        <dbReference type="HAMAP-Rule" id="MF_00451"/>
    </source>
</evidence>
<name>NDK_SACI2</name>
<accession>C3MRJ9</accession>
<comment type="function">
    <text evidence="1">Major role in the synthesis of nucleoside triphosphates other than ATP. The ATP gamma phosphate is transferred to the NDP beta phosphate via a ping-pong mechanism, using a phosphorylated active-site intermediate.</text>
</comment>
<comment type="catalytic activity">
    <reaction evidence="1">
        <text>a 2'-deoxyribonucleoside 5'-diphosphate + ATP = a 2'-deoxyribonucleoside 5'-triphosphate + ADP</text>
        <dbReference type="Rhea" id="RHEA:44640"/>
        <dbReference type="ChEBI" id="CHEBI:30616"/>
        <dbReference type="ChEBI" id="CHEBI:61560"/>
        <dbReference type="ChEBI" id="CHEBI:73316"/>
        <dbReference type="ChEBI" id="CHEBI:456216"/>
        <dbReference type="EC" id="2.7.4.6"/>
    </reaction>
</comment>
<comment type="catalytic activity">
    <reaction evidence="1">
        <text>a ribonucleoside 5'-diphosphate + ATP = a ribonucleoside 5'-triphosphate + ADP</text>
        <dbReference type="Rhea" id="RHEA:18113"/>
        <dbReference type="ChEBI" id="CHEBI:30616"/>
        <dbReference type="ChEBI" id="CHEBI:57930"/>
        <dbReference type="ChEBI" id="CHEBI:61557"/>
        <dbReference type="ChEBI" id="CHEBI:456216"/>
        <dbReference type="EC" id="2.7.4.6"/>
    </reaction>
</comment>
<comment type="cofactor">
    <cofactor evidence="1">
        <name>Mg(2+)</name>
        <dbReference type="ChEBI" id="CHEBI:18420"/>
    </cofactor>
</comment>
<comment type="subcellular location">
    <subcellularLocation>
        <location evidence="1">Cytoplasm</location>
    </subcellularLocation>
</comment>
<comment type="similarity">
    <text evidence="1">Belongs to the NDK family.</text>
</comment>
<proteinExistence type="inferred from homology"/>
<feature type="chain" id="PRO_1000206225" description="Nucleoside diphosphate kinase">
    <location>
        <begin position="1"/>
        <end position="138"/>
    </location>
</feature>
<feature type="active site" description="Pros-phosphohistidine intermediate" evidence="1">
    <location>
        <position position="117"/>
    </location>
</feature>
<feature type="binding site" evidence="1">
    <location>
        <position position="11"/>
    </location>
    <ligand>
        <name>ATP</name>
        <dbReference type="ChEBI" id="CHEBI:30616"/>
    </ligand>
</feature>
<feature type="binding site" evidence="1">
    <location>
        <position position="59"/>
    </location>
    <ligand>
        <name>ATP</name>
        <dbReference type="ChEBI" id="CHEBI:30616"/>
    </ligand>
</feature>
<feature type="binding site" evidence="1">
    <location>
        <position position="87"/>
    </location>
    <ligand>
        <name>ATP</name>
        <dbReference type="ChEBI" id="CHEBI:30616"/>
    </ligand>
</feature>
<feature type="binding site" evidence="1">
    <location>
        <position position="93"/>
    </location>
    <ligand>
        <name>ATP</name>
        <dbReference type="ChEBI" id="CHEBI:30616"/>
    </ligand>
</feature>
<feature type="binding site" evidence="1">
    <location>
        <position position="104"/>
    </location>
    <ligand>
        <name>ATP</name>
        <dbReference type="ChEBI" id="CHEBI:30616"/>
    </ligand>
</feature>
<feature type="binding site" evidence="1">
    <location>
        <position position="114"/>
    </location>
    <ligand>
        <name>ATP</name>
        <dbReference type="ChEBI" id="CHEBI:30616"/>
    </ligand>
</feature>
<organism>
    <name type="scientific">Saccharolobus islandicus (strain L.S.2.15 / Lassen #1)</name>
    <name type="common">Sulfolobus islandicus</name>
    <dbReference type="NCBI Taxonomy" id="429572"/>
    <lineage>
        <taxon>Archaea</taxon>
        <taxon>Thermoproteota</taxon>
        <taxon>Thermoprotei</taxon>
        <taxon>Sulfolobales</taxon>
        <taxon>Sulfolobaceae</taxon>
        <taxon>Saccharolobus</taxon>
    </lineage>
</organism>
<sequence>MVMQRTFVMIKPDGVKRGLIGEIISRFEKRGLKIVSLKMVKMSRDIAEKLYDEHKGKSFFEELVNYVTSGPVVCMVIEGDDVVQVIRRMIGNTDPKEAPPGTIRGDYALSKSENVIHASDSIEKAQREMSLFFDKSDL</sequence>